<proteinExistence type="inferred from homology"/>
<feature type="chain" id="PRO_0000114222" description="Chromosomal replication initiator protein DnaA">
    <location>
        <begin position="1"/>
        <end position="459"/>
    </location>
</feature>
<feature type="region of interest" description="Domain I, interacts with DnaA modulators" evidence="1">
    <location>
        <begin position="1"/>
        <end position="74"/>
    </location>
</feature>
<feature type="region of interest" description="Domain II" evidence="1">
    <location>
        <begin position="74"/>
        <end position="122"/>
    </location>
</feature>
<feature type="region of interest" description="Disordered" evidence="2">
    <location>
        <begin position="87"/>
        <end position="122"/>
    </location>
</feature>
<feature type="region of interest" description="Domain III, AAA+ region" evidence="1">
    <location>
        <begin position="123"/>
        <end position="339"/>
    </location>
</feature>
<feature type="region of interest" description="Domain IV, binds dsDNA" evidence="1">
    <location>
        <begin position="340"/>
        <end position="459"/>
    </location>
</feature>
<feature type="compositionally biased region" description="Polar residues" evidence="2">
    <location>
        <begin position="89"/>
        <end position="98"/>
    </location>
</feature>
<feature type="compositionally biased region" description="Basic and acidic residues" evidence="2">
    <location>
        <begin position="99"/>
        <end position="108"/>
    </location>
</feature>
<feature type="compositionally biased region" description="Polar residues" evidence="2">
    <location>
        <begin position="112"/>
        <end position="122"/>
    </location>
</feature>
<feature type="binding site" evidence="1">
    <location>
        <position position="167"/>
    </location>
    <ligand>
        <name>ATP</name>
        <dbReference type="ChEBI" id="CHEBI:30616"/>
    </ligand>
</feature>
<feature type="binding site" evidence="1">
    <location>
        <position position="169"/>
    </location>
    <ligand>
        <name>ATP</name>
        <dbReference type="ChEBI" id="CHEBI:30616"/>
    </ligand>
</feature>
<feature type="binding site" evidence="1">
    <location>
        <position position="170"/>
    </location>
    <ligand>
        <name>ATP</name>
        <dbReference type="ChEBI" id="CHEBI:30616"/>
    </ligand>
</feature>
<feature type="binding site" evidence="1">
    <location>
        <position position="171"/>
    </location>
    <ligand>
        <name>ATP</name>
        <dbReference type="ChEBI" id="CHEBI:30616"/>
    </ligand>
</feature>
<evidence type="ECO:0000255" key="1">
    <source>
        <dbReference type="HAMAP-Rule" id="MF_00377"/>
    </source>
</evidence>
<evidence type="ECO:0000256" key="2">
    <source>
        <dbReference type="SAM" id="MobiDB-lite"/>
    </source>
</evidence>
<dbReference type="EMBL" id="AL954747">
    <property type="protein sequence ID" value="CAD83912.1"/>
    <property type="molecule type" value="Genomic_DNA"/>
</dbReference>
<dbReference type="RefSeq" id="WP_011110653.1">
    <property type="nucleotide sequence ID" value="NC_004757.1"/>
</dbReference>
<dbReference type="SMR" id="Q82Y84"/>
<dbReference type="STRING" id="228410.NE0001"/>
<dbReference type="GeneID" id="87103205"/>
<dbReference type="KEGG" id="neu:NE0001"/>
<dbReference type="eggNOG" id="COG0593">
    <property type="taxonomic scope" value="Bacteria"/>
</dbReference>
<dbReference type="HOGENOM" id="CLU_026910_3_1_4"/>
<dbReference type="OrthoDB" id="9807019at2"/>
<dbReference type="PhylomeDB" id="Q82Y84"/>
<dbReference type="Proteomes" id="UP000001416">
    <property type="component" value="Chromosome"/>
</dbReference>
<dbReference type="GO" id="GO:0005737">
    <property type="term" value="C:cytoplasm"/>
    <property type="evidence" value="ECO:0007669"/>
    <property type="project" value="UniProtKB-SubCell"/>
</dbReference>
<dbReference type="GO" id="GO:0005886">
    <property type="term" value="C:plasma membrane"/>
    <property type="evidence" value="ECO:0007669"/>
    <property type="project" value="TreeGrafter"/>
</dbReference>
<dbReference type="GO" id="GO:0005524">
    <property type="term" value="F:ATP binding"/>
    <property type="evidence" value="ECO:0007669"/>
    <property type="project" value="UniProtKB-UniRule"/>
</dbReference>
<dbReference type="GO" id="GO:0016887">
    <property type="term" value="F:ATP hydrolysis activity"/>
    <property type="evidence" value="ECO:0007669"/>
    <property type="project" value="InterPro"/>
</dbReference>
<dbReference type="GO" id="GO:0003688">
    <property type="term" value="F:DNA replication origin binding"/>
    <property type="evidence" value="ECO:0007669"/>
    <property type="project" value="UniProtKB-UniRule"/>
</dbReference>
<dbReference type="GO" id="GO:0008289">
    <property type="term" value="F:lipid binding"/>
    <property type="evidence" value="ECO:0007669"/>
    <property type="project" value="UniProtKB-KW"/>
</dbReference>
<dbReference type="GO" id="GO:0006270">
    <property type="term" value="P:DNA replication initiation"/>
    <property type="evidence" value="ECO:0007669"/>
    <property type="project" value="UniProtKB-UniRule"/>
</dbReference>
<dbReference type="GO" id="GO:0006275">
    <property type="term" value="P:regulation of DNA replication"/>
    <property type="evidence" value="ECO:0007669"/>
    <property type="project" value="UniProtKB-UniRule"/>
</dbReference>
<dbReference type="CDD" id="cd00009">
    <property type="entry name" value="AAA"/>
    <property type="match status" value="1"/>
</dbReference>
<dbReference type="CDD" id="cd06571">
    <property type="entry name" value="Bac_DnaA_C"/>
    <property type="match status" value="1"/>
</dbReference>
<dbReference type="FunFam" id="1.10.8.60:FF:000003">
    <property type="entry name" value="Chromosomal replication initiator protein DnaA"/>
    <property type="match status" value="1"/>
</dbReference>
<dbReference type="FunFam" id="3.40.50.300:FF:000668">
    <property type="entry name" value="Chromosomal replication initiator protein DnaA"/>
    <property type="match status" value="1"/>
</dbReference>
<dbReference type="Gene3D" id="1.10.1750.10">
    <property type="match status" value="1"/>
</dbReference>
<dbReference type="Gene3D" id="1.10.8.60">
    <property type="match status" value="1"/>
</dbReference>
<dbReference type="Gene3D" id="3.30.300.180">
    <property type="match status" value="1"/>
</dbReference>
<dbReference type="Gene3D" id="3.40.50.300">
    <property type="entry name" value="P-loop containing nucleotide triphosphate hydrolases"/>
    <property type="match status" value="1"/>
</dbReference>
<dbReference type="HAMAP" id="MF_00377">
    <property type="entry name" value="DnaA_bact"/>
    <property type="match status" value="1"/>
</dbReference>
<dbReference type="InterPro" id="IPR003593">
    <property type="entry name" value="AAA+_ATPase"/>
</dbReference>
<dbReference type="InterPro" id="IPR001957">
    <property type="entry name" value="Chromosome_initiator_DnaA"/>
</dbReference>
<dbReference type="InterPro" id="IPR020591">
    <property type="entry name" value="Chromosome_initiator_DnaA-like"/>
</dbReference>
<dbReference type="InterPro" id="IPR018312">
    <property type="entry name" value="Chromosome_initiator_DnaA_CS"/>
</dbReference>
<dbReference type="InterPro" id="IPR013159">
    <property type="entry name" value="DnaA_C"/>
</dbReference>
<dbReference type="InterPro" id="IPR013317">
    <property type="entry name" value="DnaA_dom"/>
</dbReference>
<dbReference type="InterPro" id="IPR024633">
    <property type="entry name" value="DnaA_N_dom"/>
</dbReference>
<dbReference type="InterPro" id="IPR038454">
    <property type="entry name" value="DnaA_N_sf"/>
</dbReference>
<dbReference type="InterPro" id="IPR027417">
    <property type="entry name" value="P-loop_NTPase"/>
</dbReference>
<dbReference type="InterPro" id="IPR010921">
    <property type="entry name" value="Trp_repressor/repl_initiator"/>
</dbReference>
<dbReference type="NCBIfam" id="TIGR00362">
    <property type="entry name" value="DnaA"/>
    <property type="match status" value="1"/>
</dbReference>
<dbReference type="PANTHER" id="PTHR30050">
    <property type="entry name" value="CHROMOSOMAL REPLICATION INITIATOR PROTEIN DNAA"/>
    <property type="match status" value="1"/>
</dbReference>
<dbReference type="PANTHER" id="PTHR30050:SF2">
    <property type="entry name" value="CHROMOSOMAL REPLICATION INITIATOR PROTEIN DNAA"/>
    <property type="match status" value="1"/>
</dbReference>
<dbReference type="Pfam" id="PF00308">
    <property type="entry name" value="Bac_DnaA"/>
    <property type="match status" value="1"/>
</dbReference>
<dbReference type="Pfam" id="PF08299">
    <property type="entry name" value="Bac_DnaA_C"/>
    <property type="match status" value="1"/>
</dbReference>
<dbReference type="Pfam" id="PF11638">
    <property type="entry name" value="DnaA_N"/>
    <property type="match status" value="1"/>
</dbReference>
<dbReference type="PRINTS" id="PR00051">
    <property type="entry name" value="DNAA"/>
</dbReference>
<dbReference type="SMART" id="SM00382">
    <property type="entry name" value="AAA"/>
    <property type="match status" value="1"/>
</dbReference>
<dbReference type="SMART" id="SM00760">
    <property type="entry name" value="Bac_DnaA_C"/>
    <property type="match status" value="1"/>
</dbReference>
<dbReference type="SUPFAM" id="SSF52540">
    <property type="entry name" value="P-loop containing nucleoside triphosphate hydrolases"/>
    <property type="match status" value="1"/>
</dbReference>
<dbReference type="SUPFAM" id="SSF48295">
    <property type="entry name" value="TrpR-like"/>
    <property type="match status" value="1"/>
</dbReference>
<dbReference type="PROSITE" id="PS01008">
    <property type="entry name" value="DNAA"/>
    <property type="match status" value="1"/>
</dbReference>
<name>DNAA_NITEU</name>
<accession>Q82Y84</accession>
<reference key="1">
    <citation type="journal article" date="2003" name="J. Bacteriol.">
        <title>Complete genome sequence of the ammonia-oxidizing bacterium and obligate chemolithoautotroph Nitrosomonas europaea.</title>
        <authorList>
            <person name="Chain P."/>
            <person name="Lamerdin J.E."/>
            <person name="Larimer F.W."/>
            <person name="Regala W."/>
            <person name="Lao V."/>
            <person name="Land M.L."/>
            <person name="Hauser L."/>
            <person name="Hooper A.B."/>
            <person name="Klotz M.G."/>
            <person name="Norton J."/>
            <person name="Sayavedra-Soto L.A."/>
            <person name="Arciero D.M."/>
            <person name="Hommes N.G."/>
            <person name="Whittaker M.M."/>
            <person name="Arp D.J."/>
        </authorList>
    </citation>
    <scope>NUCLEOTIDE SEQUENCE [LARGE SCALE GENOMIC DNA]</scope>
    <source>
        <strain>ATCC 19718 / CIP 103999 / KCTC 2705 / NBRC 14298</strain>
    </source>
</reference>
<keyword id="KW-0067">ATP-binding</keyword>
<keyword id="KW-0963">Cytoplasm</keyword>
<keyword id="KW-0235">DNA replication</keyword>
<keyword id="KW-0238">DNA-binding</keyword>
<keyword id="KW-0446">Lipid-binding</keyword>
<keyword id="KW-0547">Nucleotide-binding</keyword>
<keyword id="KW-1185">Reference proteome</keyword>
<organism>
    <name type="scientific">Nitrosomonas europaea (strain ATCC 19718 / CIP 103999 / KCTC 2705 / NBRC 14298)</name>
    <dbReference type="NCBI Taxonomy" id="228410"/>
    <lineage>
        <taxon>Bacteria</taxon>
        <taxon>Pseudomonadati</taxon>
        <taxon>Pseudomonadota</taxon>
        <taxon>Betaproteobacteria</taxon>
        <taxon>Nitrosomonadales</taxon>
        <taxon>Nitrosomonadaceae</taxon>
        <taxon>Nitrosomonas</taxon>
    </lineage>
</organism>
<sequence length="459" mass="52536">MQKIETFWHFCLKHFRQELNGQQFNTWIKPLKLEVCPDEKNTLILIAPNRFVLQWIKDNFVTRIDEMAQDHFNERISFRLELREPAESEAQTVRTSAQKNREDKKPAAEKTQGVTSRKTNPSQLNASFTFDAFVTGKANQLARAGAIQVAERPGIAYNPLFIYGGVGLGKTHLMQAIGNYVLELDAGAKIRYVHAEKYVSDVVSAYQHKSFDKFKLYYHSLDLLLVDDVQFFSGKNRTQEEFFYAFNALIEAHKQVIITSDCYPKEISGLEERLVSRFGWGLTVAIEPPELEMRVAILLKKALAEKIELDENTAFFIAKYIRSNVRELEGALKRVLAFSRFTGHSISLDLAKEALKDLLAIQNRQISIENIQKTVADYYKIKVADMYSKKRVRTIVRPRQVAMAIAKELTQLSLPDIGEAFGGRDHTTVLHAHRKIIELRTSDPGINRDFNALMHILRG</sequence>
<comment type="function">
    <text evidence="1">Plays an essential role in the initiation and regulation of chromosomal replication. ATP-DnaA binds to the origin of replication (oriC) to initiate formation of the DNA replication initiation complex once per cell cycle. Binds the DnaA box (a 9 base pair repeat at the origin) and separates the double-stranded (ds)DNA. Forms a right-handed helical filament on oriC DNA; dsDNA binds to the exterior of the filament while single-stranded (ss)DNA is stabiized in the filament's interior. The ATP-DnaA-oriC complex binds and stabilizes one strand of the AT-rich DNA unwinding element (DUE), permitting loading of DNA polymerase. After initiation quickly degrades to an ADP-DnaA complex that is not apt for DNA replication. Binds acidic phospholipids.</text>
</comment>
<comment type="subunit">
    <text evidence="1">Oligomerizes as a right-handed, spiral filament on DNA at oriC.</text>
</comment>
<comment type="subcellular location">
    <subcellularLocation>
        <location evidence="1">Cytoplasm</location>
    </subcellularLocation>
</comment>
<comment type="domain">
    <text evidence="1">Domain I is involved in oligomerization and binding regulators, domain II is flexibile and of varying length in different bacteria, domain III forms the AAA+ region, while domain IV binds dsDNA.</text>
</comment>
<comment type="similarity">
    <text evidence="1">Belongs to the DnaA family.</text>
</comment>
<gene>
    <name evidence="1" type="primary">dnaA</name>
    <name type="ordered locus">NE0001</name>
</gene>
<protein>
    <recommendedName>
        <fullName evidence="1">Chromosomal replication initiator protein DnaA</fullName>
    </recommendedName>
</protein>